<protein>
    <recommendedName>
        <fullName evidence="2">Wadjet protein JetD</fullName>
    </recommendedName>
</protein>
<feature type="chain" id="PRO_0000456348" description="Wadjet protein JetD">
    <location>
        <begin position="1"/>
        <end position="409"/>
    </location>
</feature>
<feature type="mutagenesis site" description="No longer protects against plasmid transformation." evidence="1">
    <original>E</original>
    <variation>A</variation>
    <location>
        <position position="274"/>
    </location>
</feature>
<evidence type="ECO:0000269" key="1">
    <source>
    </source>
</evidence>
<evidence type="ECO:0000303" key="2">
    <source>
    </source>
</evidence>
<evidence type="ECO:0000312" key="3">
    <source>
        <dbReference type="EMBL" id="ACM11448.1"/>
    </source>
</evidence>
<gene>
    <name evidence="2" type="primary">jetD</name>
    <name evidence="3" type="ordered locus">BCQ_1018</name>
</gene>
<name>JETD_BACCQ</name>
<sequence>MDYKSKILSVLLNKYENSKTAHTGERSAQRPQFSFRQKHELSKAYNDEMDYTNRLEINTALKDLIRKKIIEVKWEKWEENRIAEKVYLQYDFIPQAYREAGIEPKIEKMNRILKVLEPLAVHSWEWVRQWYKEVQQSFQNNKTARINLNDVKGYELLVKALSRLEGLEDSIPKRTFSQLVFGDTKLFETTIQNRLLIIYKRYGDIEYESDKEYLESIGILENIQPVYIKGNVDIRVRGEKIALGSFPGGFGLMDETIKELEIQYVHDESIMLIENMTTYYEQIKKNNNILFIYTGGFPKKNVQQLLKKLNIYLENHPVPVYHYGDLDYGGIQIFEYIKRSFFSGLEPYMMDVATYRQFVKYGMEFGEGYEEKLLKMLENEQYSLWHELIKEMLKEKKRVEQEVIVRNVI</sequence>
<organism>
    <name type="scientific">Bacillus cereus (strain Q1)</name>
    <dbReference type="NCBI Taxonomy" id="361100"/>
    <lineage>
        <taxon>Bacteria</taxon>
        <taxon>Bacillati</taxon>
        <taxon>Bacillota</taxon>
        <taxon>Bacilli</taxon>
        <taxon>Bacillales</taxon>
        <taxon>Bacillaceae</taxon>
        <taxon>Bacillus</taxon>
        <taxon>Bacillus cereus group</taxon>
    </lineage>
</organism>
<comment type="function">
    <text evidence="1">Component of antiplasmid transformation system Wadjet type I, composed of JetA, JetB, JetC and JetD. Expression of Wadjet type I in B.subtilis (strain BEST7003) reduces the transformation efficiency of plasmid pHCMC05.</text>
</comment>
<comment type="disruption phenotype">
    <text evidence="1">When this gene is missing the Wadjet system does not confer plasmid-transformation resistance in B.subtilis.</text>
</comment>
<proteinExistence type="evidence at protein level"/>
<accession>B9IS86</accession>
<dbReference type="EMBL" id="CP000227">
    <property type="protein sequence ID" value="ACM11448.1"/>
    <property type="molecule type" value="Genomic_DNA"/>
</dbReference>
<dbReference type="SMR" id="B9IS86"/>
<dbReference type="KEGG" id="bcq:BCQ_1018"/>
<dbReference type="HOGENOM" id="CLU_054915_2_0_9"/>
<dbReference type="Proteomes" id="UP000000441">
    <property type="component" value="Chromosome"/>
</dbReference>
<dbReference type="GO" id="GO:0005694">
    <property type="term" value="C:chromosome"/>
    <property type="evidence" value="ECO:0007669"/>
    <property type="project" value="InterPro"/>
</dbReference>
<dbReference type="GO" id="GO:0003677">
    <property type="term" value="F:DNA binding"/>
    <property type="evidence" value="ECO:0007669"/>
    <property type="project" value="InterPro"/>
</dbReference>
<dbReference type="Gene3D" id="3.40.1360.10">
    <property type="match status" value="1"/>
</dbReference>
<dbReference type="InterPro" id="IPR024534">
    <property type="entry name" value="JetD_C"/>
</dbReference>
<dbReference type="InterPro" id="IPR036078">
    <property type="entry name" value="Spo11/TopoVI_A_sf"/>
</dbReference>
<dbReference type="Pfam" id="PF09983">
    <property type="entry name" value="JetD_C"/>
    <property type="match status" value="1"/>
</dbReference>
<dbReference type="SUPFAM" id="SSF56726">
    <property type="entry name" value="DNA topoisomerase IV, alpha subunit"/>
    <property type="match status" value="1"/>
</dbReference>
<reference evidence="3" key="1">
    <citation type="journal article" date="2009" name="J. Bacteriol.">
        <title>Complete genome sequence of the extremophilic Bacillus cereus strain Q1 with industrial applications.</title>
        <authorList>
            <person name="Xiong Z."/>
            <person name="Jiang Y."/>
            <person name="Qi D."/>
            <person name="Lu H."/>
            <person name="Yang F."/>
            <person name="Yang J."/>
            <person name="Chen L."/>
            <person name="Sun L."/>
            <person name="Xu X."/>
            <person name="Xue Y."/>
            <person name="Zhu Y."/>
            <person name="Jin Q."/>
        </authorList>
    </citation>
    <scope>NUCLEOTIDE SEQUENCE [LARGE SCALE GENOMIC DNA]</scope>
    <source>
        <strain>Q1</strain>
    </source>
</reference>
<reference key="2">
    <citation type="journal article" date="2018" name="Science">
        <title>Systematic discovery of antiphage defense systems in the microbial pangenome.</title>
        <authorList>
            <person name="Doron S."/>
            <person name="Melamed S."/>
            <person name="Ofir G."/>
            <person name="Leavitt A."/>
            <person name="Lopatina A."/>
            <person name="Keren M."/>
            <person name="Amitai G."/>
            <person name="Sorek R."/>
        </authorList>
    </citation>
    <scope>FUNCTION</scope>
    <scope>DISRUPTION PHENOTYPE</scope>
    <scope>MUTAGENESIS OF GLU-274</scope>
    <source>
        <strain>Q1</strain>
    </source>
</reference>